<sequence length="269" mass="28654">MAASSSSSMALSSPTLAGKQLKLNPSSQELGAARFTMRKSATTKKVASSGSPWYGPDRVKYLGPFSGESPSYLTGEFPGDYGWDTAGLSADPETFSKNRELEVIHSRWAMLGALGCVFPELLSRNGVKFGEAVWFKAGSQIFSEGGLDYLGNPSLVHAQSILAIWATQVILMGAVEGYRIAGGPLGEVVDPLYPGGSFDPLGLADDPEAFAELKVKELKNGRLAMFSMFGFFVQAIVTGKGPLENLADHLADPVNNNAWSYATNFVPGK</sequence>
<dbReference type="EMBL" id="K02067">
    <property type="protein sequence ID" value="AAA33651.1"/>
    <property type="molecule type" value="Genomic_DNA"/>
</dbReference>
<dbReference type="EMBL" id="M64619">
    <property type="protein sequence ID" value="AAA63413.1"/>
    <property type="molecule type" value="Genomic_DNA"/>
</dbReference>
<dbReference type="PIR" id="A26780">
    <property type="entry name" value="CDPM80"/>
</dbReference>
<dbReference type="PDB" id="1VCR">
    <property type="method" value="X-ray"/>
    <property type="resolution" value="9.50 A"/>
    <property type="chains" value="A=38-269"/>
</dbReference>
<dbReference type="PDB" id="2BHW">
    <property type="method" value="X-ray"/>
    <property type="resolution" value="2.50 A"/>
    <property type="chains" value="A/B/C=38-269"/>
</dbReference>
<dbReference type="PDBsum" id="1VCR"/>
<dbReference type="PDBsum" id="2BHW"/>
<dbReference type="SMR" id="P07371"/>
<dbReference type="DIP" id="DIP-40897N"/>
<dbReference type="IntAct" id="P07371">
    <property type="interactions" value="3"/>
</dbReference>
<dbReference type="OrthoDB" id="1494514at2759"/>
<dbReference type="EvolutionaryTrace" id="P07371"/>
<dbReference type="GO" id="GO:0009535">
    <property type="term" value="C:chloroplast thylakoid membrane"/>
    <property type="evidence" value="ECO:0007669"/>
    <property type="project" value="UniProtKB-SubCell"/>
</dbReference>
<dbReference type="GO" id="GO:0009522">
    <property type="term" value="C:photosystem I"/>
    <property type="evidence" value="ECO:0007669"/>
    <property type="project" value="UniProtKB-KW"/>
</dbReference>
<dbReference type="GO" id="GO:0009523">
    <property type="term" value="C:photosystem II"/>
    <property type="evidence" value="ECO:0007669"/>
    <property type="project" value="UniProtKB-KW"/>
</dbReference>
<dbReference type="GO" id="GO:0016168">
    <property type="term" value="F:chlorophyll binding"/>
    <property type="evidence" value="ECO:0007669"/>
    <property type="project" value="UniProtKB-KW"/>
</dbReference>
<dbReference type="GO" id="GO:0046872">
    <property type="term" value="F:metal ion binding"/>
    <property type="evidence" value="ECO:0007669"/>
    <property type="project" value="UniProtKB-KW"/>
</dbReference>
<dbReference type="GO" id="GO:0009765">
    <property type="term" value="P:photosynthesis, light harvesting"/>
    <property type="evidence" value="ECO:0007669"/>
    <property type="project" value="InterPro"/>
</dbReference>
<dbReference type="FunFam" id="1.10.3460.10:FF:000001">
    <property type="entry name" value="Chlorophyll a-b binding protein, chloroplastic"/>
    <property type="match status" value="1"/>
</dbReference>
<dbReference type="Gene3D" id="1.10.3460.10">
    <property type="entry name" value="Chlorophyll a/b binding protein domain"/>
    <property type="match status" value="1"/>
</dbReference>
<dbReference type="InterPro" id="IPR001344">
    <property type="entry name" value="Chloro_AB-bd_pln"/>
</dbReference>
<dbReference type="InterPro" id="IPR022796">
    <property type="entry name" value="Chloroa_b-bind"/>
</dbReference>
<dbReference type="PANTHER" id="PTHR21649">
    <property type="entry name" value="CHLOROPHYLL A/B BINDING PROTEIN"/>
    <property type="match status" value="1"/>
</dbReference>
<dbReference type="Pfam" id="PF00504">
    <property type="entry name" value="Chloroa_b-bind"/>
    <property type="match status" value="1"/>
</dbReference>
<dbReference type="SUPFAM" id="SSF103511">
    <property type="entry name" value="Chlorophyll a-b binding protein"/>
    <property type="match status" value="1"/>
</dbReference>
<proteinExistence type="evidence at protein level"/>
<organism>
    <name type="scientific">Pisum sativum</name>
    <name type="common">Garden pea</name>
    <name type="synonym">Lathyrus oleraceus</name>
    <dbReference type="NCBI Taxonomy" id="3888"/>
    <lineage>
        <taxon>Eukaryota</taxon>
        <taxon>Viridiplantae</taxon>
        <taxon>Streptophyta</taxon>
        <taxon>Embryophyta</taxon>
        <taxon>Tracheophyta</taxon>
        <taxon>Spermatophyta</taxon>
        <taxon>Magnoliopsida</taxon>
        <taxon>eudicotyledons</taxon>
        <taxon>Gunneridae</taxon>
        <taxon>Pentapetalae</taxon>
        <taxon>rosids</taxon>
        <taxon>fabids</taxon>
        <taxon>Fabales</taxon>
        <taxon>Fabaceae</taxon>
        <taxon>Papilionoideae</taxon>
        <taxon>50 kb inversion clade</taxon>
        <taxon>NPAAA clade</taxon>
        <taxon>Hologalegina</taxon>
        <taxon>IRL clade</taxon>
        <taxon>Fabeae</taxon>
        <taxon>Pisum</taxon>
    </lineage>
</organism>
<reference key="1">
    <citation type="journal article" date="1984" name="Proc. Natl. Acad. Sci. U.S.A.">
        <title>Structure and expression of a pea nuclear gene encoding a chlorophyll a/b-binding polypeptide.</title>
        <authorList>
            <person name="Cashmore A.R."/>
        </authorList>
    </citation>
    <scope>NUCLEOTIDE SEQUENCE [GENOMIC DNA]</scope>
    <source>
        <strain>cv. Progress No. 9</strain>
    </source>
</reference>
<reference key="2">
    <citation type="book" date="1985" name="Molecular biology of the photosynthetic apparatus">
        <title>Structure and expression of nuclear genes encoding polypeptides of the photosynthetic apparatus.</title>
        <editorList>
            <person name="Steinbeck K.E."/>
            <person name="Bonitz S.G."/>
            <person name="Arntzen C.J."/>
            <person name="Bogorad L."/>
        </editorList>
        <authorList>
            <person name="Timko M.P."/>
            <person name="Kausch A.P."/>
            <person name="Hand J.M."/>
            <person name="Cashmore A.R."/>
            <person name="Herrera-Estrella L."/>
            <person name="Van den Broeck G."/>
            <person name="Van Montagu M.M."/>
        </authorList>
    </citation>
    <scope>NUCLEOTIDE SEQUENCE [GENOMIC DNA]</scope>
</reference>
<reference key="3">
    <citation type="journal article" date="1990" name="Eur. J. Biochem.">
        <title>Dicyclohexylcarbodiimide-binding proteins related to the short circuit of the proton-pumping activity of photosystem II. Identified as light-harvesting chlorophyll-a/b-binding proteins.</title>
        <authorList>
            <person name="Jahns P."/>
            <person name="Junge W."/>
        </authorList>
    </citation>
    <scope>PROTEIN SEQUENCE OF 111-126</scope>
    <scope>FUNCTION</scope>
    <source>
        <tissue>Seedling</tissue>
    </source>
</reference>
<reference key="4">
    <citation type="journal article" date="1999" name="Biochemistry">
        <title>Exchange of pigment-binding amino acids in light-harvesting chlorophyll a/b protein.</title>
        <authorList>
            <person name="Yang C."/>
            <person name="Kosemund K."/>
            <person name="Cornet C."/>
            <person name="Paulsen H."/>
        </authorList>
    </citation>
    <scope>CHLOROPHYLL BINDING</scope>
    <scope>MUTAGENESIS OF GLU-102; HIS-105; GLN-168; GLN-234 AND HIS-249</scope>
</reference>
<reference key="5">
    <citation type="journal article" date="1999" name="Biochemistry">
        <title>Mutant trimers of light-harvesting complex II exhibit altered pigment content and spectroscopic features.</title>
        <authorList>
            <person name="Rogl H."/>
            <person name="Kuehlbrandt W."/>
        </authorList>
    </citation>
    <scope>CHLOROPHYLL BINDING</scope>
    <scope>MUTAGENESIS OF GLU-102; HIS-105; 114-LEU-GLY-115; GLN-168; GLU-176; GLU-217; ASN-220; GLN-234 AND HIS-249</scope>
</reference>
<reference key="6">
    <citation type="journal article" date="1994" name="Nature">
        <title>Atomic model of plant light-harvesting complex by electron crystallography.</title>
        <authorList>
            <person name="Kuehlbrandt W."/>
            <person name="Wang D.N."/>
            <person name="Fujiyoshi Y."/>
        </authorList>
    </citation>
    <scope>X-RAY CRYSTALLOGRAPHY (3.4 ANGSTROMS)</scope>
</reference>
<reference key="7">
    <citation type="journal article" date="2004" name="Acta Crystallogr. D">
        <title>An icosahedral assembly of the light-harvesting chlorophyll a/b protein complex from pea chloroplast thylakoid membranes.</title>
        <authorList>
            <person name="Hino T."/>
            <person name="Kanamori E."/>
            <person name="Shen J.-R."/>
            <person name="Kouyama T."/>
        </authorList>
    </citation>
    <scope>X-RAY CRYSTALLOGRAPHY (9.5 ANGSTROMS) OF 38-269 IN COMPLEX WITH CHLOROPHYLL A-B AND CAROTENOIDS</scope>
    <scope>COFACTOR</scope>
</reference>
<reference evidence="10" key="8">
    <citation type="journal article" date="2005" name="EMBO J.">
        <title>Mechanisms of photoprotection and nonphotochemical quenching in pea light-harvesting complex at 2.5 A resolution.</title>
        <authorList>
            <person name="Standfuss J."/>
            <person name="Terwisscha van Scheltinga A.C."/>
            <person name="Lamborghini M."/>
            <person name="Kuhlbrandt W."/>
        </authorList>
    </citation>
    <scope>X-RAY CRYSTALLOGRAPHY (2.50 ANGSTROMS) OF 38-269 IN COMPLEX WITH CHLOROPHYLL A AND CHLOROPHYLL B</scope>
</reference>
<accession>P07371</accession>
<accession>P35389</accession>
<accession>Q53X02</accession>
<name>CB22_PEA</name>
<keyword id="KW-0002">3D-structure</keyword>
<keyword id="KW-0007">Acetylation</keyword>
<keyword id="KW-0148">Chlorophyll</keyword>
<keyword id="KW-0150">Chloroplast</keyword>
<keyword id="KW-0157">Chromophore</keyword>
<keyword id="KW-0903">Direct protein sequencing</keyword>
<keyword id="KW-0460">Magnesium</keyword>
<keyword id="KW-0472">Membrane</keyword>
<keyword id="KW-0479">Metal-binding</keyword>
<keyword id="KW-0597">Phosphoprotein</keyword>
<keyword id="KW-0602">Photosynthesis</keyword>
<keyword id="KW-0603">Photosystem I</keyword>
<keyword id="KW-0604">Photosystem II</keyword>
<keyword id="KW-0934">Plastid</keyword>
<keyword id="KW-0793">Thylakoid</keyword>
<keyword id="KW-0809">Transit peptide</keyword>
<keyword id="KW-0812">Transmembrane</keyword>
<keyword id="KW-1133">Transmembrane helix</keyword>
<comment type="function">
    <text evidence="7">The light-harvesting complex (LHC) functions as a light receptor, it captures and delivers excitation energy to photosystems with which it is closely associated.</text>
</comment>
<comment type="function">
    <text evidence="7">May channel protons produced in the catalytic Mn center of water oxidation into the thylakoid lumen.</text>
</comment>
<comment type="cofactor">
    <text evidence="9">Binds at least 14 chlorophylls (8 Chl-a and 6 Chl-b) and carotenoids such as lutein and neoxanthin.</text>
</comment>
<comment type="subunit">
    <text evidence="5">The LHC complex consists of chlorophyll a-b binding proteins.</text>
</comment>
<comment type="interaction">
    <interactant intactId="EBI-2353186">
        <id>P07371</id>
    </interactant>
    <interactant intactId="EBI-780656">
        <id>O22265</id>
        <label>CAO</label>
    </interactant>
    <organismsDiffer>true</organismsDiffer>
    <experiments>7</experiments>
</comment>
<comment type="subcellular location">
    <subcellularLocation>
        <location>Plastid</location>
        <location>Chloroplast thylakoid membrane</location>
        <topology>Multi-pass membrane protein</topology>
    </subcellularLocation>
</comment>
<comment type="domain">
    <text>The N-terminus of the protein extends into the stroma where it is involved with adhesion of granal membranes and post-translational modifications; both are believed to mediate the distribution of excitation energy between photosystems I and II.</text>
</comment>
<comment type="PTM">
    <text>Photoregulated by reversible phosphorylation of its threonine residues.</text>
</comment>
<comment type="similarity">
    <text evidence="8">Belongs to the light-harvesting chlorophyll a/b-binding (LHC) protein family.</text>
</comment>
<feature type="transit peptide" description="Chloroplast" evidence="8">
    <location>
        <begin position="1"/>
        <end position="37"/>
    </location>
</feature>
<feature type="chain" id="PRO_0000003680" description="Chlorophyll a-b binding protein AB80, chloroplastic">
    <location>
        <begin position="38"/>
        <end position="269"/>
    </location>
</feature>
<feature type="transmembrane region" description="Helical" evidence="2">
    <location>
        <begin position="103"/>
        <end position="123"/>
    </location>
</feature>
<feature type="transmembrane region" description="Helical" evidence="2">
    <location>
        <begin position="155"/>
        <end position="175"/>
    </location>
</feature>
<feature type="transmembrane region" description="Helical" evidence="2">
    <location>
        <begin position="223"/>
        <end position="243"/>
    </location>
</feature>
<feature type="binding site" description="axial binding residue" evidence="6 10">
    <location>
        <position position="61"/>
    </location>
    <ligand>
        <name>chlorophyll b</name>
        <dbReference type="ChEBI" id="CHEBI:61721"/>
        <label>1</label>
    </ligand>
    <ligandPart>
        <name>Mg</name>
        <dbReference type="ChEBI" id="CHEBI:25107"/>
    </ligandPart>
</feature>
<feature type="binding site" evidence="6 10">
    <location>
        <position position="83"/>
    </location>
    <ligand>
        <name>chlorophyll a</name>
        <dbReference type="ChEBI" id="CHEBI:58416"/>
        <label>1</label>
    </ligand>
</feature>
<feature type="binding site" evidence="6 10">
    <location>
        <position position="89"/>
    </location>
    <ligand>
        <name>chlorophyll a</name>
        <dbReference type="ChEBI" id="CHEBI:58416"/>
        <label>1</label>
    </ligand>
</feature>
<feature type="binding site" description="axial binding residue" evidence="6 10">
    <location>
        <position position="102"/>
    </location>
    <ligand>
        <name>chlorophyll a</name>
        <dbReference type="ChEBI" id="CHEBI:58416"/>
        <label>1</label>
    </ligand>
    <ligandPart>
        <name>Mg</name>
        <dbReference type="ChEBI" id="CHEBI:25107"/>
    </ligandPart>
</feature>
<feature type="binding site" description="axial binding residue" evidence="6 10">
    <location>
        <position position="105"/>
    </location>
    <ligand>
        <name>chlorophyll a</name>
        <dbReference type="ChEBI" id="CHEBI:58416"/>
        <label>2</label>
    </ligand>
    <ligandPart>
        <name>Mg</name>
        <dbReference type="ChEBI" id="CHEBI:25107"/>
    </ligandPart>
</feature>
<feature type="binding site" evidence="6 10">
    <location>
        <position position="107"/>
    </location>
    <ligand>
        <name>chlorophyll b</name>
        <dbReference type="ChEBI" id="CHEBI:61721"/>
        <label>2</label>
    </ligand>
</feature>
<feature type="binding site" evidence="6 10">
    <location>
        <position position="140"/>
    </location>
    <ligand>
        <name>chlorophyll a</name>
        <dbReference type="ChEBI" id="CHEBI:58416"/>
        <label>3</label>
    </ligand>
</feature>
<feature type="binding site" evidence="6 10">
    <location>
        <position position="150"/>
    </location>
    <ligand>
        <name>chlorophyll a</name>
        <dbReference type="ChEBI" id="CHEBI:58416"/>
        <label>3</label>
    </ligand>
</feature>
<feature type="binding site" description="axial binding residue" evidence="6 10">
    <location>
        <position position="156"/>
    </location>
    <ligand>
        <name>chlorophyll b</name>
        <dbReference type="ChEBI" id="CHEBI:61721"/>
        <label>2</label>
    </ligand>
    <ligandPart>
        <name>Mg</name>
        <dbReference type="ChEBI" id="CHEBI:25107"/>
    </ligandPart>
</feature>
<feature type="binding site" evidence="6 10">
    <location>
        <position position="160"/>
    </location>
    <ligand>
        <name>chlorophyll b</name>
        <dbReference type="ChEBI" id="CHEBI:61721"/>
        <label>3</label>
    </ligand>
</feature>
<feature type="binding site" evidence="6 10">
    <location>
        <position position="168"/>
    </location>
    <ligand>
        <name>chlorophyll b</name>
        <dbReference type="ChEBI" id="CHEBI:61721"/>
        <label>4</label>
    </ligand>
</feature>
<feature type="binding site" evidence="6 10">
    <location>
        <position position="168"/>
    </location>
    <ligand>
        <name>chlorophyll b</name>
        <dbReference type="ChEBI" id="CHEBI:61721"/>
        <label>5</label>
    </ligand>
</feature>
<feature type="binding site" description="axial binding residue" evidence="6 10">
    <location>
        <position position="176"/>
    </location>
    <ligand>
        <name>chlorophyll b</name>
        <dbReference type="ChEBI" id="CHEBI:61721"/>
        <label>3</label>
    </ligand>
    <ligandPart>
        <name>Mg</name>
        <dbReference type="ChEBI" id="CHEBI:25107"/>
    </ligandPart>
</feature>
<feature type="binding site" evidence="6 10">
    <location>
        <position position="179"/>
    </location>
    <ligand>
        <name>chlorophyll b</name>
        <dbReference type="ChEBI" id="CHEBI:61721"/>
        <label>4</label>
    </ligand>
</feature>
<feature type="binding site" evidence="6 10">
    <location>
        <position position="185"/>
    </location>
    <ligand>
        <name>chlorophyll b</name>
        <dbReference type="ChEBI" id="CHEBI:61721"/>
        <label>2</label>
    </ligand>
</feature>
<feature type="binding site" evidence="6 10">
    <location>
        <position position="216"/>
    </location>
    <ligand>
        <name>chlorophyll a</name>
        <dbReference type="ChEBI" id="CHEBI:58416"/>
        <label>5</label>
    </ligand>
</feature>
<feature type="binding site" description="axial binding residue" evidence="6 10">
    <location>
        <position position="217"/>
    </location>
    <ligand>
        <name>chlorophyll a</name>
        <dbReference type="ChEBI" id="CHEBI:58416"/>
        <label>3</label>
    </ligand>
    <ligandPart>
        <name>Mg</name>
        <dbReference type="ChEBI" id="CHEBI:25107"/>
    </ligandPart>
</feature>
<feature type="binding site" description="axial binding residue" evidence="6 10">
    <location>
        <position position="220"/>
    </location>
    <ligand>
        <name>chlorophyll a</name>
        <dbReference type="ChEBI" id="CHEBI:58416"/>
        <label>4</label>
    </ligand>
    <ligandPart>
        <name>Mg</name>
        <dbReference type="ChEBI" id="CHEBI:25107"/>
    </ligandPart>
</feature>
<feature type="binding site" evidence="6 10">
    <location>
        <position position="222"/>
    </location>
    <ligand>
        <name>chlorophyll a</name>
        <dbReference type="ChEBI" id="CHEBI:58416"/>
        <label>1</label>
    </ligand>
</feature>
<feature type="binding site" description="axial binding residue" evidence="6 10">
    <location>
        <position position="234"/>
    </location>
    <ligand>
        <name>chlorophyll a</name>
        <dbReference type="ChEBI" id="CHEBI:58416"/>
        <label>5</label>
    </ligand>
    <ligandPart>
        <name>Mg</name>
        <dbReference type="ChEBI" id="CHEBI:25107"/>
    </ligandPart>
</feature>
<feature type="binding site" description="axial binding residue" evidence="6 10">
    <location>
        <position position="249"/>
    </location>
    <ligand>
        <name>chlorophyll a</name>
        <dbReference type="ChEBI" id="CHEBI:58416"/>
        <label>6</label>
    </ligand>
    <ligandPart>
        <name>Mg</name>
        <dbReference type="ChEBI" id="CHEBI:25107"/>
    </ligandPart>
</feature>
<feature type="binding site" evidence="6 10">
    <location>
        <position position="258"/>
    </location>
    <ligand>
        <name>chlorophyll a</name>
        <dbReference type="ChEBI" id="CHEBI:58416"/>
        <label>6</label>
    </ligand>
</feature>
<feature type="binding site" evidence="6 10">
    <location>
        <position position="265"/>
    </location>
    <ligand>
        <name>chlorophyll b</name>
        <dbReference type="ChEBI" id="CHEBI:61721"/>
        <label>5</label>
    </ligand>
</feature>
<feature type="modified residue" description="N2-acetylarginine" evidence="1">
    <location>
        <position position="38"/>
    </location>
</feature>
<feature type="mutagenesis site" description="Decreases binding to chlorophyll-b." evidence="3 4">
    <original>E</original>
    <variation>A</variation>
    <location>
        <position position="102"/>
    </location>
</feature>
<feature type="mutagenesis site" description="Causes a strong decrease in LHCII complex stability; when associated with L-105." evidence="3 4">
    <original>E</original>
    <variation>Q</variation>
    <location>
        <position position="102"/>
    </location>
</feature>
<feature type="mutagenesis site" description="Decreases binding to chlorophyll-a." evidence="3 4">
    <original>H</original>
    <variation>A</variation>
    <location>
        <position position="105"/>
    </location>
</feature>
<feature type="mutagenesis site" description="Decreases binding to chlorophyll, more chlorophyll-a than chlorophyll-b is lost. Causes a strong decrease in LHCII complex stability." evidence="3 4">
    <original>H</original>
    <variation>F</variation>
    <location>
        <position position="105"/>
    </location>
</feature>
<feature type="mutagenesis site" description="Decreases binding to chlorophyll, more chlorophyll-a than chlorophyll-b is lost. Causes a strong decrease in LHCII complex stability. Complex stability is reduced further; when associated with Q-102." evidence="3 4">
    <original>H</original>
    <variation>L</variation>
    <location>
        <position position="105"/>
    </location>
</feature>
<feature type="mutagenesis site" description="Decreases binding to chlorophyll-b." evidence="4">
    <original>LG</original>
    <variation>VF</variation>
    <location>
        <begin position="114"/>
        <end position="115"/>
    </location>
</feature>
<feature type="mutagenesis site" description="Decreases binding to chlorophyll-b." evidence="3 4">
    <original>Q</original>
    <variation>A</variation>
    <location>
        <position position="168"/>
    </location>
</feature>
<feature type="mutagenesis site" description="Decreases binding to chlorophyll, more chlorophyll-b than chlorophyll-a is lost. Causes a strong decrease in LHCII complex stability." evidence="3 4">
    <original>Q</original>
    <variation>E</variation>
    <variation>S</variation>
    <location>
        <position position="168"/>
    </location>
</feature>
<feature type="mutagenesis site" description="Decreases binding to chlorophyll-b." evidence="4">
    <original>E</original>
    <variation>A</variation>
    <location>
        <position position="176"/>
    </location>
</feature>
<feature type="mutagenesis site" description="Decreases binding to chlorophyll-a." evidence="4">
    <original>E</original>
    <variation>A</variation>
    <location>
        <position position="217"/>
    </location>
</feature>
<feature type="mutagenesis site" description="Decreases binding to chlorophyll-a and possibly chlorophyll-b." evidence="4">
    <original>N</original>
    <variation>A</variation>
    <location>
        <position position="220"/>
    </location>
</feature>
<feature type="mutagenesis site" description="Decreases binding to chlorophyll. Causes a moderate decrease in LHCII complex stability." evidence="3 4">
    <original>Q</original>
    <variation>E</variation>
    <variation>S</variation>
    <location>
        <position position="234"/>
    </location>
</feature>
<feature type="mutagenesis site" description="Decreases binding to chlorophyll-a." evidence="3 4">
    <original>Q</original>
    <variation>L</variation>
    <location>
        <position position="234"/>
    </location>
</feature>
<feature type="mutagenesis site" description="Decreases binding to chlorophyll-a." evidence="3 4">
    <original>H</original>
    <variation>A</variation>
    <location>
        <position position="249"/>
    </location>
</feature>
<feature type="mutagenesis site" description="Decreases binding to chlorophyll-a and chlorophyll-b. Causes a minor decrease in LHCII complex stability." evidence="3 4">
    <original>H</original>
    <variation>F</variation>
    <variation>L</variation>
    <location>
        <position position="249"/>
    </location>
</feature>
<feature type="helix" evidence="11">
    <location>
        <begin position="63"/>
        <end position="65"/>
    </location>
</feature>
<feature type="helix" evidence="11">
    <location>
        <begin position="92"/>
        <end position="123"/>
    </location>
</feature>
<feature type="turn" evidence="11">
    <location>
        <begin position="124"/>
        <end position="126"/>
    </location>
</feature>
<feature type="helix" evidence="11">
    <location>
        <begin position="134"/>
        <end position="136"/>
    </location>
</feature>
<feature type="helix" evidence="11">
    <location>
        <begin position="138"/>
        <end position="142"/>
    </location>
</feature>
<feature type="helix" evidence="11">
    <location>
        <begin position="149"/>
        <end position="151"/>
    </location>
</feature>
<feature type="helix" evidence="11">
    <location>
        <begin position="161"/>
        <end position="181"/>
    </location>
</feature>
<feature type="strand" evidence="11">
    <location>
        <begin position="189"/>
        <end position="192"/>
    </location>
</feature>
<feature type="helix" evidence="11">
    <location>
        <begin position="207"/>
        <end position="238"/>
    </location>
</feature>
<feature type="helix" evidence="11">
    <location>
        <begin position="243"/>
        <end position="251"/>
    </location>
</feature>
<feature type="turn" evidence="11">
    <location>
        <begin position="253"/>
        <end position="255"/>
    </location>
</feature>
<feature type="helix" evidence="11">
    <location>
        <begin position="258"/>
        <end position="261"/>
    </location>
</feature>
<feature type="turn" evidence="11">
    <location>
        <begin position="262"/>
        <end position="265"/>
    </location>
</feature>
<evidence type="ECO:0000250" key="1"/>
<evidence type="ECO:0000255" key="2"/>
<evidence type="ECO:0000269" key="3">
    <source>
    </source>
</evidence>
<evidence type="ECO:0000269" key="4">
    <source>
    </source>
</evidence>
<evidence type="ECO:0000269" key="5">
    <source>
    </source>
</evidence>
<evidence type="ECO:0000269" key="6">
    <source>
    </source>
</evidence>
<evidence type="ECO:0000269" key="7">
    <source>
    </source>
</evidence>
<evidence type="ECO:0000305" key="8"/>
<evidence type="ECO:0000305" key="9">
    <source>
    </source>
</evidence>
<evidence type="ECO:0007744" key="10">
    <source>
        <dbReference type="PDB" id="2BHW"/>
    </source>
</evidence>
<evidence type="ECO:0007829" key="11">
    <source>
        <dbReference type="PDB" id="2BHW"/>
    </source>
</evidence>
<gene>
    <name type="primary">AB80</name>
</gene>
<protein>
    <recommendedName>
        <fullName>Chlorophyll a-b binding protein AB80, chloroplastic</fullName>
    </recommendedName>
    <alternativeName>
        <fullName>LHCII type I CAB-AB80</fullName>
        <shortName>LHCP</shortName>
    </alternativeName>
</protein>